<evidence type="ECO:0000255" key="1">
    <source>
        <dbReference type="HAMAP-Rule" id="MF_00564"/>
    </source>
</evidence>
<organism>
    <name type="scientific">Chromobacterium violaceum (strain ATCC 12472 / DSM 30191 / JCM 1249 / CCUG 213 / NBRC 12614 / NCIMB 9131 / NCTC 9757 / MK)</name>
    <dbReference type="NCBI Taxonomy" id="243365"/>
    <lineage>
        <taxon>Bacteria</taxon>
        <taxon>Pseudomonadati</taxon>
        <taxon>Pseudomonadota</taxon>
        <taxon>Betaproteobacteria</taxon>
        <taxon>Neisseriales</taxon>
        <taxon>Chromobacteriaceae</taxon>
        <taxon>Chromobacterium</taxon>
    </lineage>
</organism>
<accession>Q7MBD4</accession>
<comment type="function">
    <text evidence="1">Phosphorolytic 3'-5' exoribonuclease that plays an important role in tRNA 3'-end maturation. Removes nucleotide residues following the 3'-CCA terminus of tRNAs; can also add nucleotides to the ends of RNA molecules by using nucleoside diphosphates as substrates, but this may not be physiologically important. Probably plays a role in initiation of 16S rRNA degradation (leading to ribosome degradation) during starvation.</text>
</comment>
<comment type="catalytic activity">
    <reaction evidence="1">
        <text>tRNA(n+1) + phosphate = tRNA(n) + a ribonucleoside 5'-diphosphate</text>
        <dbReference type="Rhea" id="RHEA:10628"/>
        <dbReference type="Rhea" id="RHEA-COMP:17343"/>
        <dbReference type="Rhea" id="RHEA-COMP:17344"/>
        <dbReference type="ChEBI" id="CHEBI:43474"/>
        <dbReference type="ChEBI" id="CHEBI:57930"/>
        <dbReference type="ChEBI" id="CHEBI:173114"/>
        <dbReference type="EC" id="2.7.7.56"/>
    </reaction>
</comment>
<comment type="subunit">
    <text evidence="1">Homohexameric ring arranged as a trimer of dimers.</text>
</comment>
<comment type="similarity">
    <text evidence="1">Belongs to the RNase PH family.</text>
</comment>
<reference key="1">
    <citation type="journal article" date="2003" name="Proc. Natl. Acad. Sci. U.S.A.">
        <title>The complete genome sequence of Chromobacterium violaceum reveals remarkable and exploitable bacterial adaptability.</title>
        <authorList>
            <person name="Vasconcelos A.T.R."/>
            <person name="de Almeida D.F."/>
            <person name="Hungria M."/>
            <person name="Guimaraes C.T."/>
            <person name="Antonio R.V."/>
            <person name="Almeida F.C."/>
            <person name="de Almeida L.G.P."/>
            <person name="de Almeida R."/>
            <person name="Alves-Gomes J.A."/>
            <person name="Andrade E.M."/>
            <person name="Araripe J."/>
            <person name="de Araujo M.F.F."/>
            <person name="Astolfi-Filho S."/>
            <person name="Azevedo V."/>
            <person name="Baptista A.J."/>
            <person name="Bataus L.A.M."/>
            <person name="Batista J.S."/>
            <person name="Belo A."/>
            <person name="van den Berg C."/>
            <person name="Bogo M."/>
            <person name="Bonatto S."/>
            <person name="Bordignon J."/>
            <person name="Brigido M.M."/>
            <person name="Brito C.A."/>
            <person name="Brocchi M."/>
            <person name="Burity H.A."/>
            <person name="Camargo A.A."/>
            <person name="Cardoso D.D.P."/>
            <person name="Carneiro N.P."/>
            <person name="Carraro D.M."/>
            <person name="Carvalho C.M.B."/>
            <person name="Cascardo J.C.M."/>
            <person name="Cavada B.S."/>
            <person name="Chueire L.M.O."/>
            <person name="Creczynski-Pasa T.B."/>
            <person name="Cunha-Junior N.C."/>
            <person name="Fagundes N."/>
            <person name="Falcao C.L."/>
            <person name="Fantinatti F."/>
            <person name="Farias I.P."/>
            <person name="Felipe M.S.S."/>
            <person name="Ferrari L.P."/>
            <person name="Ferro J.A."/>
            <person name="Ferro M.I.T."/>
            <person name="Franco G.R."/>
            <person name="Freitas N.S.A."/>
            <person name="Furlan L.R."/>
            <person name="Gazzinelli R.T."/>
            <person name="Gomes E.A."/>
            <person name="Goncalves P.R."/>
            <person name="Grangeiro T.B."/>
            <person name="Grattapaglia D."/>
            <person name="Grisard E.C."/>
            <person name="Hanna E.S."/>
            <person name="Jardim S.N."/>
            <person name="Laurino J."/>
            <person name="Leoi L.C.T."/>
            <person name="Lima L.F.A."/>
            <person name="Loureiro M.F."/>
            <person name="Lyra M.C.C.P."/>
            <person name="Madeira H.M.F."/>
            <person name="Manfio G.P."/>
            <person name="Maranhao A.Q."/>
            <person name="Martins W.S."/>
            <person name="di Mauro S.M.Z."/>
            <person name="de Medeiros S.R.B."/>
            <person name="Meissner R.V."/>
            <person name="Moreira M.A.M."/>
            <person name="Nascimento F.F."/>
            <person name="Nicolas M.F."/>
            <person name="Oliveira J.G."/>
            <person name="Oliveira S.C."/>
            <person name="Paixao R.F.C."/>
            <person name="Parente J.A."/>
            <person name="Pedrosa F.O."/>
            <person name="Pena S.D.J."/>
            <person name="Pereira J.O."/>
            <person name="Pereira M."/>
            <person name="Pinto L.S.R.C."/>
            <person name="Pinto L.S."/>
            <person name="Porto J.I.R."/>
            <person name="Potrich D.P."/>
            <person name="Ramalho-Neto C.E."/>
            <person name="Reis A.M.M."/>
            <person name="Rigo L.U."/>
            <person name="Rondinelli E."/>
            <person name="Santos E.B.P."/>
            <person name="Santos F.R."/>
            <person name="Schneider M.P.C."/>
            <person name="Seuanez H.N."/>
            <person name="Silva A.M.R."/>
            <person name="da Silva A.L.C."/>
            <person name="Silva D.W."/>
            <person name="Silva R."/>
            <person name="Simoes I.C."/>
            <person name="Simon D."/>
            <person name="Soares C.M.A."/>
            <person name="Soares R.B.A."/>
            <person name="Souza E.M."/>
            <person name="Souza K.R.L."/>
            <person name="Souza R.C."/>
            <person name="Steffens M.B.R."/>
            <person name="Steindel M."/>
            <person name="Teixeira S.R."/>
            <person name="Urmenyi T."/>
            <person name="Vettore A."/>
            <person name="Wassem R."/>
            <person name="Zaha A."/>
            <person name="Simpson A.J.G."/>
        </authorList>
    </citation>
    <scope>NUCLEOTIDE SEQUENCE [LARGE SCALE GENOMIC DNA]</scope>
    <source>
        <strain>ATCC 12472 / DSM 30191 / JCM 1249 / CCUG 213 / NBRC 12614 / NCIMB 9131 / NCTC 9757 / MK</strain>
    </source>
</reference>
<protein>
    <recommendedName>
        <fullName evidence="1">Ribonuclease PH</fullName>
        <shortName evidence="1">RNase PH</shortName>
        <ecNumber evidence="1">2.7.7.56</ecNumber>
    </recommendedName>
    <alternativeName>
        <fullName evidence="1">tRNA nucleotidyltransferase</fullName>
    </alternativeName>
</protein>
<dbReference type="EC" id="2.7.7.56" evidence="1"/>
<dbReference type="EMBL" id="AE016825">
    <property type="protein sequence ID" value="AAQ61509.1"/>
    <property type="molecule type" value="Genomic_DNA"/>
</dbReference>
<dbReference type="RefSeq" id="WP_011137394.1">
    <property type="nucleotide sequence ID" value="NC_005085.1"/>
</dbReference>
<dbReference type="SMR" id="Q7MBD4"/>
<dbReference type="STRING" id="243365.CV_3847"/>
<dbReference type="KEGG" id="cvi:CV_3847"/>
<dbReference type="eggNOG" id="COG0689">
    <property type="taxonomic scope" value="Bacteria"/>
</dbReference>
<dbReference type="HOGENOM" id="CLU_050858_0_0_4"/>
<dbReference type="OrthoDB" id="9802265at2"/>
<dbReference type="Proteomes" id="UP000001424">
    <property type="component" value="Chromosome"/>
</dbReference>
<dbReference type="GO" id="GO:0000175">
    <property type="term" value="F:3'-5'-RNA exonuclease activity"/>
    <property type="evidence" value="ECO:0007669"/>
    <property type="project" value="UniProtKB-UniRule"/>
</dbReference>
<dbReference type="GO" id="GO:0000049">
    <property type="term" value="F:tRNA binding"/>
    <property type="evidence" value="ECO:0007669"/>
    <property type="project" value="UniProtKB-UniRule"/>
</dbReference>
<dbReference type="GO" id="GO:0009022">
    <property type="term" value="F:tRNA nucleotidyltransferase activity"/>
    <property type="evidence" value="ECO:0007669"/>
    <property type="project" value="UniProtKB-UniRule"/>
</dbReference>
<dbReference type="GO" id="GO:0016075">
    <property type="term" value="P:rRNA catabolic process"/>
    <property type="evidence" value="ECO:0007669"/>
    <property type="project" value="UniProtKB-UniRule"/>
</dbReference>
<dbReference type="GO" id="GO:0006364">
    <property type="term" value="P:rRNA processing"/>
    <property type="evidence" value="ECO:0007669"/>
    <property type="project" value="UniProtKB-KW"/>
</dbReference>
<dbReference type="GO" id="GO:0008033">
    <property type="term" value="P:tRNA processing"/>
    <property type="evidence" value="ECO:0007669"/>
    <property type="project" value="UniProtKB-UniRule"/>
</dbReference>
<dbReference type="CDD" id="cd11362">
    <property type="entry name" value="RNase_PH_bact"/>
    <property type="match status" value="1"/>
</dbReference>
<dbReference type="FunFam" id="3.30.230.70:FF:000003">
    <property type="entry name" value="Ribonuclease PH"/>
    <property type="match status" value="1"/>
</dbReference>
<dbReference type="Gene3D" id="3.30.230.70">
    <property type="entry name" value="GHMP Kinase, N-terminal domain"/>
    <property type="match status" value="1"/>
</dbReference>
<dbReference type="HAMAP" id="MF_00564">
    <property type="entry name" value="RNase_PH"/>
    <property type="match status" value="1"/>
</dbReference>
<dbReference type="InterPro" id="IPR001247">
    <property type="entry name" value="ExoRNase_PH_dom1"/>
</dbReference>
<dbReference type="InterPro" id="IPR015847">
    <property type="entry name" value="ExoRNase_PH_dom2"/>
</dbReference>
<dbReference type="InterPro" id="IPR036345">
    <property type="entry name" value="ExoRNase_PH_dom2_sf"/>
</dbReference>
<dbReference type="InterPro" id="IPR027408">
    <property type="entry name" value="PNPase/RNase_PH_dom_sf"/>
</dbReference>
<dbReference type="InterPro" id="IPR020568">
    <property type="entry name" value="Ribosomal_Su5_D2-typ_SF"/>
</dbReference>
<dbReference type="InterPro" id="IPR050080">
    <property type="entry name" value="RNase_PH"/>
</dbReference>
<dbReference type="InterPro" id="IPR002381">
    <property type="entry name" value="RNase_PH_bac-type"/>
</dbReference>
<dbReference type="InterPro" id="IPR018336">
    <property type="entry name" value="RNase_PH_CS"/>
</dbReference>
<dbReference type="NCBIfam" id="TIGR01966">
    <property type="entry name" value="RNasePH"/>
    <property type="match status" value="1"/>
</dbReference>
<dbReference type="PANTHER" id="PTHR11953">
    <property type="entry name" value="EXOSOME COMPLEX COMPONENT"/>
    <property type="match status" value="1"/>
</dbReference>
<dbReference type="PANTHER" id="PTHR11953:SF0">
    <property type="entry name" value="EXOSOME COMPLEX COMPONENT RRP41"/>
    <property type="match status" value="1"/>
</dbReference>
<dbReference type="Pfam" id="PF01138">
    <property type="entry name" value="RNase_PH"/>
    <property type="match status" value="1"/>
</dbReference>
<dbReference type="Pfam" id="PF03725">
    <property type="entry name" value="RNase_PH_C"/>
    <property type="match status" value="1"/>
</dbReference>
<dbReference type="SUPFAM" id="SSF55666">
    <property type="entry name" value="Ribonuclease PH domain 2-like"/>
    <property type="match status" value="1"/>
</dbReference>
<dbReference type="SUPFAM" id="SSF54211">
    <property type="entry name" value="Ribosomal protein S5 domain 2-like"/>
    <property type="match status" value="1"/>
</dbReference>
<dbReference type="PROSITE" id="PS01277">
    <property type="entry name" value="RIBONUCLEASE_PH"/>
    <property type="match status" value="1"/>
</dbReference>
<proteinExistence type="inferred from homology"/>
<keyword id="KW-0548">Nucleotidyltransferase</keyword>
<keyword id="KW-1185">Reference proteome</keyword>
<keyword id="KW-0694">RNA-binding</keyword>
<keyword id="KW-0698">rRNA processing</keyword>
<keyword id="KW-0808">Transferase</keyword>
<keyword id="KW-0819">tRNA processing</keyword>
<keyword id="KW-0820">tRNA-binding</keyword>
<feature type="chain" id="PRO_0000139881" description="Ribonuclease PH">
    <location>
        <begin position="1"/>
        <end position="238"/>
    </location>
</feature>
<feature type="binding site" evidence="1">
    <location>
        <position position="86"/>
    </location>
    <ligand>
        <name>phosphate</name>
        <dbReference type="ChEBI" id="CHEBI:43474"/>
        <note>substrate</note>
    </ligand>
</feature>
<feature type="binding site" evidence="1">
    <location>
        <begin position="124"/>
        <end position="126"/>
    </location>
    <ligand>
        <name>phosphate</name>
        <dbReference type="ChEBI" id="CHEBI:43474"/>
        <note>substrate</note>
    </ligand>
</feature>
<gene>
    <name evidence="1" type="primary">rph</name>
    <name type="ordered locus">CV_3847</name>
</gene>
<name>RNPH_CHRVO</name>
<sequence>MRPSQRSADAMRVVRLTRSYTKHAEGSVLVEFGDTKVICTASVEETVPSFLKGKGQGWVTAEYGMLPRSTGSRMRRESAAGKQSGRTQEIQRLIGRSLRAVTDLAKLGERQIVIDCDVIQADGGTRTASITGAYVALADAIRGLIDAGKLSATPLRDQVAAVSVGVYKGQPVLDLDYLEDSDCETDMNVVMTGSGRFVEVQGTAEGEPFSEEEMAAMLGLARKGIAELLAHQRQALNV</sequence>